<proteinExistence type="evidence at transcript level"/>
<accession>Q9VGA2</accession>
<accession>B5RJ92</accession>
<accession>Q8MZE4</accession>
<organism>
    <name type="scientific">Drosophila melanogaster</name>
    <name type="common">Fruit fly</name>
    <dbReference type="NCBI Taxonomy" id="7227"/>
    <lineage>
        <taxon>Eukaryota</taxon>
        <taxon>Metazoa</taxon>
        <taxon>Ecdysozoa</taxon>
        <taxon>Arthropoda</taxon>
        <taxon>Hexapoda</taxon>
        <taxon>Insecta</taxon>
        <taxon>Pterygota</taxon>
        <taxon>Neoptera</taxon>
        <taxon>Endopterygota</taxon>
        <taxon>Diptera</taxon>
        <taxon>Brachycera</taxon>
        <taxon>Muscomorpha</taxon>
        <taxon>Ephydroidea</taxon>
        <taxon>Drosophilidae</taxon>
        <taxon>Drosophila</taxon>
        <taxon>Sophophora</taxon>
    </lineage>
</organism>
<gene>
    <name type="primary">Tim17a1</name>
    <name type="ORF">CG10090</name>
</gene>
<sequence length="222" mass="24159">MEYNRQPCPIRIVEDCGCAFMMGTIGGSLFEFLKGFRNAPTGLQRRLYGGIDLVKMRTPSIAGSFAVWGATFSTVDCALVHYRQREDAWNSILSGAATGGILAARNGIRAMANSALVGCLVLAMIEGAGAAVATINAADKGAGIVIKPQRAQWEAILETIDPKRASSTQDFALAEFERVLDKCRASREPNLLQDIPVKSHERDSKQKPFYSLLDLVKLSQMF</sequence>
<evidence type="ECO:0000250" key="1"/>
<evidence type="ECO:0000255" key="2"/>
<evidence type="ECO:0000305" key="3"/>
<reference key="1">
    <citation type="journal article" date="2000" name="Science">
        <title>The genome sequence of Drosophila melanogaster.</title>
        <authorList>
            <person name="Adams M.D."/>
            <person name="Celniker S.E."/>
            <person name="Holt R.A."/>
            <person name="Evans C.A."/>
            <person name="Gocayne J.D."/>
            <person name="Amanatides P.G."/>
            <person name="Scherer S.E."/>
            <person name="Li P.W."/>
            <person name="Hoskins R.A."/>
            <person name="Galle R.F."/>
            <person name="George R.A."/>
            <person name="Lewis S.E."/>
            <person name="Richards S."/>
            <person name="Ashburner M."/>
            <person name="Henderson S.N."/>
            <person name="Sutton G.G."/>
            <person name="Wortman J.R."/>
            <person name="Yandell M.D."/>
            <person name="Zhang Q."/>
            <person name="Chen L.X."/>
            <person name="Brandon R.C."/>
            <person name="Rogers Y.-H.C."/>
            <person name="Blazej R.G."/>
            <person name="Champe M."/>
            <person name="Pfeiffer B.D."/>
            <person name="Wan K.H."/>
            <person name="Doyle C."/>
            <person name="Baxter E.G."/>
            <person name="Helt G."/>
            <person name="Nelson C.R."/>
            <person name="Miklos G.L.G."/>
            <person name="Abril J.F."/>
            <person name="Agbayani A."/>
            <person name="An H.-J."/>
            <person name="Andrews-Pfannkoch C."/>
            <person name="Baldwin D."/>
            <person name="Ballew R.M."/>
            <person name="Basu A."/>
            <person name="Baxendale J."/>
            <person name="Bayraktaroglu L."/>
            <person name="Beasley E.M."/>
            <person name="Beeson K.Y."/>
            <person name="Benos P.V."/>
            <person name="Berman B.P."/>
            <person name="Bhandari D."/>
            <person name="Bolshakov S."/>
            <person name="Borkova D."/>
            <person name="Botchan M.R."/>
            <person name="Bouck J."/>
            <person name="Brokstein P."/>
            <person name="Brottier P."/>
            <person name="Burtis K.C."/>
            <person name="Busam D.A."/>
            <person name="Butler H."/>
            <person name="Cadieu E."/>
            <person name="Center A."/>
            <person name="Chandra I."/>
            <person name="Cherry J.M."/>
            <person name="Cawley S."/>
            <person name="Dahlke C."/>
            <person name="Davenport L.B."/>
            <person name="Davies P."/>
            <person name="de Pablos B."/>
            <person name="Delcher A."/>
            <person name="Deng Z."/>
            <person name="Mays A.D."/>
            <person name="Dew I."/>
            <person name="Dietz S.M."/>
            <person name="Dodson K."/>
            <person name="Doup L.E."/>
            <person name="Downes M."/>
            <person name="Dugan-Rocha S."/>
            <person name="Dunkov B.C."/>
            <person name="Dunn P."/>
            <person name="Durbin K.J."/>
            <person name="Evangelista C.C."/>
            <person name="Ferraz C."/>
            <person name="Ferriera S."/>
            <person name="Fleischmann W."/>
            <person name="Fosler C."/>
            <person name="Gabrielian A.E."/>
            <person name="Garg N.S."/>
            <person name="Gelbart W.M."/>
            <person name="Glasser K."/>
            <person name="Glodek A."/>
            <person name="Gong F."/>
            <person name="Gorrell J.H."/>
            <person name="Gu Z."/>
            <person name="Guan P."/>
            <person name="Harris M."/>
            <person name="Harris N.L."/>
            <person name="Harvey D.A."/>
            <person name="Heiman T.J."/>
            <person name="Hernandez J.R."/>
            <person name="Houck J."/>
            <person name="Hostin D."/>
            <person name="Houston K.A."/>
            <person name="Howland T.J."/>
            <person name="Wei M.-H."/>
            <person name="Ibegwam C."/>
            <person name="Jalali M."/>
            <person name="Kalush F."/>
            <person name="Karpen G.H."/>
            <person name="Ke Z."/>
            <person name="Kennison J.A."/>
            <person name="Ketchum K.A."/>
            <person name="Kimmel B.E."/>
            <person name="Kodira C.D."/>
            <person name="Kraft C.L."/>
            <person name="Kravitz S."/>
            <person name="Kulp D."/>
            <person name="Lai Z."/>
            <person name="Lasko P."/>
            <person name="Lei Y."/>
            <person name="Levitsky A.A."/>
            <person name="Li J.H."/>
            <person name="Li Z."/>
            <person name="Liang Y."/>
            <person name="Lin X."/>
            <person name="Liu X."/>
            <person name="Mattei B."/>
            <person name="McIntosh T.C."/>
            <person name="McLeod M.P."/>
            <person name="McPherson D."/>
            <person name="Merkulov G."/>
            <person name="Milshina N.V."/>
            <person name="Mobarry C."/>
            <person name="Morris J."/>
            <person name="Moshrefi A."/>
            <person name="Mount S.M."/>
            <person name="Moy M."/>
            <person name="Murphy B."/>
            <person name="Murphy L."/>
            <person name="Muzny D.M."/>
            <person name="Nelson D.L."/>
            <person name="Nelson D.R."/>
            <person name="Nelson K.A."/>
            <person name="Nixon K."/>
            <person name="Nusskern D.R."/>
            <person name="Pacleb J.M."/>
            <person name="Palazzolo M."/>
            <person name="Pittman G.S."/>
            <person name="Pan S."/>
            <person name="Pollard J."/>
            <person name="Puri V."/>
            <person name="Reese M.G."/>
            <person name="Reinert K."/>
            <person name="Remington K."/>
            <person name="Saunders R.D.C."/>
            <person name="Scheeler F."/>
            <person name="Shen H."/>
            <person name="Shue B.C."/>
            <person name="Siden-Kiamos I."/>
            <person name="Simpson M."/>
            <person name="Skupski M.P."/>
            <person name="Smith T.J."/>
            <person name="Spier E."/>
            <person name="Spradling A.C."/>
            <person name="Stapleton M."/>
            <person name="Strong R."/>
            <person name="Sun E."/>
            <person name="Svirskas R."/>
            <person name="Tector C."/>
            <person name="Turner R."/>
            <person name="Venter E."/>
            <person name="Wang A.H."/>
            <person name="Wang X."/>
            <person name="Wang Z.-Y."/>
            <person name="Wassarman D.A."/>
            <person name="Weinstock G.M."/>
            <person name="Weissenbach J."/>
            <person name="Williams S.M."/>
            <person name="Woodage T."/>
            <person name="Worley K.C."/>
            <person name="Wu D."/>
            <person name="Yang S."/>
            <person name="Yao Q.A."/>
            <person name="Ye J."/>
            <person name="Yeh R.-F."/>
            <person name="Zaveri J.S."/>
            <person name="Zhan M."/>
            <person name="Zhang G."/>
            <person name="Zhao Q."/>
            <person name="Zheng L."/>
            <person name="Zheng X.H."/>
            <person name="Zhong F.N."/>
            <person name="Zhong W."/>
            <person name="Zhou X."/>
            <person name="Zhu S.C."/>
            <person name="Zhu X."/>
            <person name="Smith H.O."/>
            <person name="Gibbs R.A."/>
            <person name="Myers E.W."/>
            <person name="Rubin G.M."/>
            <person name="Venter J.C."/>
        </authorList>
    </citation>
    <scope>NUCLEOTIDE SEQUENCE [LARGE SCALE GENOMIC DNA]</scope>
    <source>
        <strain>Berkeley</strain>
    </source>
</reference>
<reference key="2">
    <citation type="journal article" date="2002" name="Genome Biol.">
        <title>Annotation of the Drosophila melanogaster euchromatic genome: a systematic review.</title>
        <authorList>
            <person name="Misra S."/>
            <person name="Crosby M.A."/>
            <person name="Mungall C.J."/>
            <person name="Matthews B.B."/>
            <person name="Campbell K.S."/>
            <person name="Hradecky P."/>
            <person name="Huang Y."/>
            <person name="Kaminker J.S."/>
            <person name="Millburn G.H."/>
            <person name="Prochnik S.E."/>
            <person name="Smith C.D."/>
            <person name="Tupy J.L."/>
            <person name="Whitfield E.J."/>
            <person name="Bayraktaroglu L."/>
            <person name="Berman B.P."/>
            <person name="Bettencourt B.R."/>
            <person name="Celniker S.E."/>
            <person name="de Grey A.D.N.J."/>
            <person name="Drysdale R.A."/>
            <person name="Harris N.L."/>
            <person name="Richter J."/>
            <person name="Russo S."/>
            <person name="Schroeder A.J."/>
            <person name="Shu S.Q."/>
            <person name="Stapleton M."/>
            <person name="Yamada C."/>
            <person name="Ashburner M."/>
            <person name="Gelbart W.M."/>
            <person name="Rubin G.M."/>
            <person name="Lewis S.E."/>
        </authorList>
    </citation>
    <scope>GENOME REANNOTATION</scope>
    <source>
        <strain>Berkeley</strain>
    </source>
</reference>
<reference key="3">
    <citation type="journal article" date="2002" name="Genome Biol.">
        <title>A Drosophila full-length cDNA resource.</title>
        <authorList>
            <person name="Stapleton M."/>
            <person name="Carlson J.W."/>
            <person name="Brokstein P."/>
            <person name="Yu C."/>
            <person name="Champe M."/>
            <person name="George R.A."/>
            <person name="Guarin H."/>
            <person name="Kronmiller B."/>
            <person name="Pacleb J.M."/>
            <person name="Park S."/>
            <person name="Wan K.H."/>
            <person name="Rubin G.M."/>
            <person name="Celniker S.E."/>
        </authorList>
    </citation>
    <scope>NUCLEOTIDE SEQUENCE [LARGE SCALE MRNA]</scope>
    <source>
        <strain>Berkeley</strain>
        <tissue>Testis</tissue>
    </source>
</reference>
<reference key="4">
    <citation type="submission" date="2008-09" db="EMBL/GenBank/DDBJ databases">
        <authorList>
            <person name="Carlson J.W."/>
            <person name="Booth B."/>
            <person name="Frise E."/>
            <person name="Park S."/>
            <person name="Wan K.H."/>
            <person name="Yu C."/>
            <person name="Celniker S.E."/>
        </authorList>
    </citation>
    <scope>NUCLEOTIDE SEQUENCE [LARGE SCALE MRNA]</scope>
    <source>
        <strain>Berkeley</strain>
    </source>
</reference>
<keyword id="KW-0472">Membrane</keyword>
<keyword id="KW-0496">Mitochondrion</keyword>
<keyword id="KW-0999">Mitochondrion inner membrane</keyword>
<keyword id="KW-0653">Protein transport</keyword>
<keyword id="KW-1185">Reference proteome</keyword>
<keyword id="KW-0811">Translocation</keyword>
<keyword id="KW-0812">Transmembrane</keyword>
<keyword id="KW-1133">Transmembrane helix</keyword>
<keyword id="KW-0813">Transport</keyword>
<name>TI17C_DROME</name>
<feature type="chain" id="PRO_0000210291" description="Probable mitochondrial import inner membrane translocase subunit Tim17 3">
    <location>
        <begin position="1"/>
        <end position="222"/>
    </location>
</feature>
<feature type="transmembrane region" description="Helical" evidence="2">
    <location>
        <begin position="16"/>
        <end position="36"/>
    </location>
</feature>
<feature type="transmembrane region" description="Helical" evidence="2">
    <location>
        <begin position="60"/>
        <end position="80"/>
    </location>
</feature>
<feature type="transmembrane region" description="Helical" evidence="2">
    <location>
        <begin position="115"/>
        <end position="135"/>
    </location>
</feature>
<comment type="function">
    <text evidence="1">Essential component of the TIM23 complex, a complex that mediates the translocation of transit peptide-containing proteins across the mitochondrial inner membrane.</text>
</comment>
<comment type="subunit">
    <text evidence="1">Component of the TIM23 complex at least composed of Tim23, Tim17 (Tim17a1, Tim17a2 or Tim17b1) and a Tim50. The complex interacts with the Tim44 component of the PAM complex (By similarity).</text>
</comment>
<comment type="subcellular location">
    <subcellularLocation>
        <location evidence="1">Mitochondrion inner membrane</location>
        <topology evidence="1">Multi-pass membrane protein</topology>
    </subcellularLocation>
</comment>
<comment type="similarity">
    <text evidence="3">Belongs to the Tim17/Tim22/Tim23 family.</text>
</comment>
<comment type="sequence caution" evidence="3">
    <conflict type="erroneous termination">
        <sequence resource="EMBL-CDS" id="AAM29224"/>
    </conflict>
    <text>Truncated C-terminus.</text>
</comment>
<protein>
    <recommendedName>
        <fullName>Probable mitochondrial import inner membrane translocase subunit Tim17 3</fullName>
    </recommendedName>
</protein>
<dbReference type="EMBL" id="AE014297">
    <property type="protein sequence ID" value="AAF54783.1"/>
    <property type="molecule type" value="Genomic_DNA"/>
</dbReference>
<dbReference type="EMBL" id="AY113219">
    <property type="protein sequence ID" value="AAM29224.1"/>
    <property type="status" value="ALT_SEQ"/>
    <property type="molecule type" value="mRNA"/>
</dbReference>
<dbReference type="EMBL" id="BT044366">
    <property type="protein sequence ID" value="ACH92431.1"/>
    <property type="molecule type" value="mRNA"/>
</dbReference>
<dbReference type="RefSeq" id="NP_001287301.1">
    <property type="nucleotide sequence ID" value="NM_001300372.1"/>
</dbReference>
<dbReference type="RefSeq" id="NP_650180.1">
    <property type="nucleotide sequence ID" value="NM_141923.2"/>
</dbReference>
<dbReference type="SMR" id="Q9VGA2"/>
<dbReference type="FunCoup" id="Q9VGA2">
    <property type="interactions" value="65"/>
</dbReference>
<dbReference type="STRING" id="7227.FBpp0082080"/>
<dbReference type="PaxDb" id="7227-FBpp0082080"/>
<dbReference type="DNASU" id="41500"/>
<dbReference type="EnsemblMetazoa" id="FBtr0082610">
    <property type="protein sequence ID" value="FBpp0082080"/>
    <property type="gene ID" value="FBgn0038018"/>
</dbReference>
<dbReference type="EnsemblMetazoa" id="FBtr0344388">
    <property type="protein sequence ID" value="FBpp0310761"/>
    <property type="gene ID" value="FBgn0038018"/>
</dbReference>
<dbReference type="GeneID" id="41500"/>
<dbReference type="KEGG" id="dme:Dmel_CG10090"/>
<dbReference type="UCSC" id="CG10090-RA">
    <property type="organism name" value="d. melanogaster"/>
</dbReference>
<dbReference type="AGR" id="FB:FBgn0038018"/>
<dbReference type="CTD" id="41500"/>
<dbReference type="FlyBase" id="FBgn0038018">
    <property type="gene designation" value="Tim17a1"/>
</dbReference>
<dbReference type="VEuPathDB" id="VectorBase:FBgn0038018"/>
<dbReference type="eggNOG" id="KOG1652">
    <property type="taxonomic scope" value="Eukaryota"/>
</dbReference>
<dbReference type="GeneTree" id="ENSGT00390000017780"/>
<dbReference type="HOGENOM" id="CLU_087811_0_1_1"/>
<dbReference type="InParanoid" id="Q9VGA2"/>
<dbReference type="OMA" id="DTGCAFM"/>
<dbReference type="OrthoDB" id="2261329at2759"/>
<dbReference type="PhylomeDB" id="Q9VGA2"/>
<dbReference type="Reactome" id="R-DME-1268020">
    <property type="pathway name" value="Mitochondrial protein import"/>
</dbReference>
<dbReference type="BioGRID-ORCS" id="41500">
    <property type="hits" value="0 hits in 3 CRISPR screens"/>
</dbReference>
<dbReference type="GenomeRNAi" id="41500"/>
<dbReference type="PRO" id="PR:Q9VGA2"/>
<dbReference type="Proteomes" id="UP000000803">
    <property type="component" value="Chromosome 3R"/>
</dbReference>
<dbReference type="Bgee" id="FBgn0038018">
    <property type="expression patterns" value="Expressed in mid-late elongation-stage spermatid (Drosophila) in testis and 22 other cell types or tissues"/>
</dbReference>
<dbReference type="ExpressionAtlas" id="Q9VGA2">
    <property type="expression patterns" value="baseline and differential"/>
</dbReference>
<dbReference type="GO" id="GO:0005744">
    <property type="term" value="C:TIM23 mitochondrial import inner membrane translocase complex"/>
    <property type="evidence" value="ECO:0000318"/>
    <property type="project" value="GO_Central"/>
</dbReference>
<dbReference type="GO" id="GO:0030150">
    <property type="term" value="P:protein import into mitochondrial matrix"/>
    <property type="evidence" value="ECO:0000318"/>
    <property type="project" value="GO_Central"/>
</dbReference>
<dbReference type="PANTHER" id="PTHR10485:SF0">
    <property type="entry name" value="AT05822P-RELATED"/>
    <property type="match status" value="1"/>
</dbReference>
<dbReference type="PANTHER" id="PTHR10485">
    <property type="entry name" value="MITOCHONDRIAL IMPORT INNER MEMBRANE TRANSLOCASE SUBUNIT TIM-17"/>
    <property type="match status" value="1"/>
</dbReference>
<dbReference type="Pfam" id="PF02466">
    <property type="entry name" value="Tim17"/>
    <property type="match status" value="1"/>
</dbReference>